<organism>
    <name type="scientific">Clostridium perfringens (strain ATCC 13124 / DSM 756 / JCM 1290 / NCIMB 6125 / NCTC 8237 / Type A)</name>
    <dbReference type="NCBI Taxonomy" id="195103"/>
    <lineage>
        <taxon>Bacteria</taxon>
        <taxon>Bacillati</taxon>
        <taxon>Bacillota</taxon>
        <taxon>Clostridia</taxon>
        <taxon>Eubacteriales</taxon>
        <taxon>Clostridiaceae</taxon>
        <taxon>Clostridium</taxon>
    </lineage>
</organism>
<protein>
    <recommendedName>
        <fullName evidence="1">Small ribosomal subunit protein bS21</fullName>
    </recommendedName>
    <alternativeName>
        <fullName evidence="3">30S ribosomal protein S21</fullName>
    </alternativeName>
</protein>
<evidence type="ECO:0000255" key="1">
    <source>
        <dbReference type="HAMAP-Rule" id="MF_00358"/>
    </source>
</evidence>
<evidence type="ECO:0000256" key="2">
    <source>
        <dbReference type="SAM" id="MobiDB-lite"/>
    </source>
</evidence>
<evidence type="ECO:0000305" key="3"/>
<dbReference type="EMBL" id="CP000246">
    <property type="protein sequence ID" value="ABG84592.1"/>
    <property type="molecule type" value="Genomic_DNA"/>
</dbReference>
<dbReference type="RefSeq" id="WP_003451446.1">
    <property type="nucleotide sequence ID" value="NC_008261.1"/>
</dbReference>
<dbReference type="SMR" id="Q0TNT7"/>
<dbReference type="STRING" id="195103.CPF_2280"/>
<dbReference type="PaxDb" id="195103-CPF_2280"/>
<dbReference type="GeneID" id="93001439"/>
<dbReference type="KEGG" id="cpf:CPF_2280"/>
<dbReference type="eggNOG" id="COG0828">
    <property type="taxonomic scope" value="Bacteria"/>
</dbReference>
<dbReference type="HOGENOM" id="CLU_159258_1_2_9"/>
<dbReference type="Proteomes" id="UP000001823">
    <property type="component" value="Chromosome"/>
</dbReference>
<dbReference type="GO" id="GO:1990904">
    <property type="term" value="C:ribonucleoprotein complex"/>
    <property type="evidence" value="ECO:0007669"/>
    <property type="project" value="UniProtKB-KW"/>
</dbReference>
<dbReference type="GO" id="GO:0005840">
    <property type="term" value="C:ribosome"/>
    <property type="evidence" value="ECO:0007669"/>
    <property type="project" value="UniProtKB-KW"/>
</dbReference>
<dbReference type="GO" id="GO:0003735">
    <property type="term" value="F:structural constituent of ribosome"/>
    <property type="evidence" value="ECO:0007669"/>
    <property type="project" value="InterPro"/>
</dbReference>
<dbReference type="GO" id="GO:0006412">
    <property type="term" value="P:translation"/>
    <property type="evidence" value="ECO:0007669"/>
    <property type="project" value="UniProtKB-UniRule"/>
</dbReference>
<dbReference type="Gene3D" id="1.20.5.1150">
    <property type="entry name" value="Ribosomal protein S8"/>
    <property type="match status" value="1"/>
</dbReference>
<dbReference type="HAMAP" id="MF_00358">
    <property type="entry name" value="Ribosomal_bS21"/>
    <property type="match status" value="1"/>
</dbReference>
<dbReference type="InterPro" id="IPR001911">
    <property type="entry name" value="Ribosomal_bS21"/>
</dbReference>
<dbReference type="InterPro" id="IPR018278">
    <property type="entry name" value="Ribosomal_bS21_CS"/>
</dbReference>
<dbReference type="InterPro" id="IPR038380">
    <property type="entry name" value="Ribosomal_bS21_sf"/>
</dbReference>
<dbReference type="NCBIfam" id="TIGR00030">
    <property type="entry name" value="S21p"/>
    <property type="match status" value="1"/>
</dbReference>
<dbReference type="PANTHER" id="PTHR21109">
    <property type="entry name" value="MITOCHONDRIAL 28S RIBOSOMAL PROTEIN S21"/>
    <property type="match status" value="1"/>
</dbReference>
<dbReference type="PANTHER" id="PTHR21109:SF22">
    <property type="entry name" value="SMALL RIBOSOMAL SUBUNIT PROTEIN BS21"/>
    <property type="match status" value="1"/>
</dbReference>
<dbReference type="Pfam" id="PF01165">
    <property type="entry name" value="Ribosomal_S21"/>
    <property type="match status" value="1"/>
</dbReference>
<dbReference type="PRINTS" id="PR00976">
    <property type="entry name" value="RIBOSOMALS21"/>
</dbReference>
<dbReference type="PROSITE" id="PS01181">
    <property type="entry name" value="RIBOSOMAL_S21"/>
    <property type="match status" value="1"/>
</dbReference>
<sequence length="58" mass="7016">MSEIRVKENESLEQALRRFKRQCARAGVLSEVRKREHYEKPSVKRKKKSEAARKRKFK</sequence>
<keyword id="KW-0687">Ribonucleoprotein</keyword>
<keyword id="KW-0689">Ribosomal protein</keyword>
<name>RS21_CLOP1</name>
<comment type="similarity">
    <text evidence="1">Belongs to the bacterial ribosomal protein bS21 family.</text>
</comment>
<proteinExistence type="inferred from homology"/>
<reference key="1">
    <citation type="journal article" date="2006" name="Genome Res.">
        <title>Skewed genomic variability in strains of the toxigenic bacterial pathogen, Clostridium perfringens.</title>
        <authorList>
            <person name="Myers G.S.A."/>
            <person name="Rasko D.A."/>
            <person name="Cheung J.K."/>
            <person name="Ravel J."/>
            <person name="Seshadri R."/>
            <person name="DeBoy R.T."/>
            <person name="Ren Q."/>
            <person name="Varga J."/>
            <person name="Awad M.M."/>
            <person name="Brinkac L.M."/>
            <person name="Daugherty S.C."/>
            <person name="Haft D.H."/>
            <person name="Dodson R.J."/>
            <person name="Madupu R."/>
            <person name="Nelson W.C."/>
            <person name="Rosovitz M.J."/>
            <person name="Sullivan S.A."/>
            <person name="Khouri H."/>
            <person name="Dimitrov G.I."/>
            <person name="Watkins K.L."/>
            <person name="Mulligan S."/>
            <person name="Benton J."/>
            <person name="Radune D."/>
            <person name="Fisher D.J."/>
            <person name="Atkins H.S."/>
            <person name="Hiscox T."/>
            <person name="Jost B.H."/>
            <person name="Billington S.J."/>
            <person name="Songer J.G."/>
            <person name="McClane B.A."/>
            <person name="Titball R.W."/>
            <person name="Rood J.I."/>
            <person name="Melville S.B."/>
            <person name="Paulsen I.T."/>
        </authorList>
    </citation>
    <scope>NUCLEOTIDE SEQUENCE [LARGE SCALE GENOMIC DNA]</scope>
    <source>
        <strain>ATCC 13124 / DSM 756 / JCM 1290 / NCIMB 6125 / NCTC 8237 / S 107 / Type A</strain>
    </source>
</reference>
<gene>
    <name evidence="1" type="primary">rpsU</name>
    <name type="ordered locus">CPF_2280</name>
</gene>
<feature type="chain" id="PRO_0000266657" description="Small ribosomal subunit protein bS21">
    <location>
        <begin position="1"/>
        <end position="58"/>
    </location>
</feature>
<feature type="region of interest" description="Disordered" evidence="2">
    <location>
        <begin position="30"/>
        <end position="58"/>
    </location>
</feature>
<feature type="compositionally biased region" description="Basic and acidic residues" evidence="2">
    <location>
        <begin position="31"/>
        <end position="42"/>
    </location>
</feature>
<feature type="compositionally biased region" description="Basic residues" evidence="2">
    <location>
        <begin position="43"/>
        <end position="58"/>
    </location>
</feature>
<accession>Q0TNT7</accession>